<dbReference type="EMBL" id="CP000462">
    <property type="protein sequence ID" value="ABK37324.1"/>
    <property type="molecule type" value="Genomic_DNA"/>
</dbReference>
<dbReference type="RefSeq" id="WP_011707913.1">
    <property type="nucleotide sequence ID" value="NC_008570.1"/>
</dbReference>
<dbReference type="RefSeq" id="YP_858685.1">
    <property type="nucleotide sequence ID" value="NC_008570.1"/>
</dbReference>
<dbReference type="SMR" id="A0KQY4"/>
<dbReference type="STRING" id="380703.AHA_4268"/>
<dbReference type="EnsemblBacteria" id="ABK37324">
    <property type="protein sequence ID" value="ABK37324"/>
    <property type="gene ID" value="AHA_4268"/>
</dbReference>
<dbReference type="GeneID" id="4487372"/>
<dbReference type="KEGG" id="aha:AHA_4268"/>
<dbReference type="PATRIC" id="fig|380703.7.peg.4218"/>
<dbReference type="eggNOG" id="COG0356">
    <property type="taxonomic scope" value="Bacteria"/>
</dbReference>
<dbReference type="HOGENOM" id="CLU_041018_1_0_6"/>
<dbReference type="OrthoDB" id="9789241at2"/>
<dbReference type="Proteomes" id="UP000000756">
    <property type="component" value="Chromosome"/>
</dbReference>
<dbReference type="GO" id="GO:0005886">
    <property type="term" value="C:plasma membrane"/>
    <property type="evidence" value="ECO:0007669"/>
    <property type="project" value="UniProtKB-SubCell"/>
</dbReference>
<dbReference type="GO" id="GO:0045259">
    <property type="term" value="C:proton-transporting ATP synthase complex"/>
    <property type="evidence" value="ECO:0007669"/>
    <property type="project" value="UniProtKB-KW"/>
</dbReference>
<dbReference type="GO" id="GO:0046933">
    <property type="term" value="F:proton-transporting ATP synthase activity, rotational mechanism"/>
    <property type="evidence" value="ECO:0007669"/>
    <property type="project" value="UniProtKB-UniRule"/>
</dbReference>
<dbReference type="GO" id="GO:0042777">
    <property type="term" value="P:proton motive force-driven plasma membrane ATP synthesis"/>
    <property type="evidence" value="ECO:0007669"/>
    <property type="project" value="TreeGrafter"/>
</dbReference>
<dbReference type="CDD" id="cd00310">
    <property type="entry name" value="ATP-synt_Fo_a_6"/>
    <property type="match status" value="1"/>
</dbReference>
<dbReference type="FunFam" id="1.20.120.220:FF:000002">
    <property type="entry name" value="ATP synthase subunit a"/>
    <property type="match status" value="1"/>
</dbReference>
<dbReference type="Gene3D" id="1.20.120.220">
    <property type="entry name" value="ATP synthase, F0 complex, subunit A"/>
    <property type="match status" value="1"/>
</dbReference>
<dbReference type="HAMAP" id="MF_01393">
    <property type="entry name" value="ATP_synth_a_bact"/>
    <property type="match status" value="1"/>
</dbReference>
<dbReference type="InterPro" id="IPR045082">
    <property type="entry name" value="ATP_syn_F0_a_bact/chloroplast"/>
</dbReference>
<dbReference type="InterPro" id="IPR000568">
    <property type="entry name" value="ATP_synth_F0_asu"/>
</dbReference>
<dbReference type="InterPro" id="IPR023011">
    <property type="entry name" value="ATP_synth_F0_asu_AS"/>
</dbReference>
<dbReference type="InterPro" id="IPR035908">
    <property type="entry name" value="F0_ATP_A_sf"/>
</dbReference>
<dbReference type="NCBIfam" id="TIGR01131">
    <property type="entry name" value="ATP_synt_6_or_A"/>
    <property type="match status" value="1"/>
</dbReference>
<dbReference type="NCBIfam" id="NF004477">
    <property type="entry name" value="PRK05815.1-1"/>
    <property type="match status" value="1"/>
</dbReference>
<dbReference type="PANTHER" id="PTHR42823">
    <property type="entry name" value="ATP SYNTHASE SUBUNIT A, CHLOROPLASTIC"/>
    <property type="match status" value="1"/>
</dbReference>
<dbReference type="PANTHER" id="PTHR42823:SF3">
    <property type="entry name" value="ATP SYNTHASE SUBUNIT A, CHLOROPLASTIC"/>
    <property type="match status" value="1"/>
</dbReference>
<dbReference type="Pfam" id="PF00119">
    <property type="entry name" value="ATP-synt_A"/>
    <property type="match status" value="1"/>
</dbReference>
<dbReference type="PRINTS" id="PR00123">
    <property type="entry name" value="ATPASEA"/>
</dbReference>
<dbReference type="SUPFAM" id="SSF81336">
    <property type="entry name" value="F1F0 ATP synthase subunit A"/>
    <property type="match status" value="1"/>
</dbReference>
<dbReference type="PROSITE" id="PS00449">
    <property type="entry name" value="ATPASE_A"/>
    <property type="match status" value="1"/>
</dbReference>
<name>ATP6_AERHH</name>
<feature type="chain" id="PRO_0000362227" description="ATP synthase subunit a">
    <location>
        <begin position="1"/>
        <end position="260"/>
    </location>
</feature>
<feature type="transmembrane region" description="Helical" evidence="1">
    <location>
        <begin position="27"/>
        <end position="47"/>
    </location>
</feature>
<feature type="transmembrane region" description="Helical" evidence="1">
    <location>
        <begin position="90"/>
        <end position="110"/>
    </location>
</feature>
<feature type="transmembrane region" description="Helical" evidence="1">
    <location>
        <begin position="132"/>
        <end position="154"/>
    </location>
</feature>
<feature type="transmembrane region" description="Helical" evidence="1">
    <location>
        <begin position="208"/>
        <end position="228"/>
    </location>
</feature>
<feature type="transmembrane region" description="Helical" evidence="1">
    <location>
        <begin position="230"/>
        <end position="250"/>
    </location>
</feature>
<proteinExistence type="inferred from homology"/>
<organism>
    <name type="scientific">Aeromonas hydrophila subsp. hydrophila (strain ATCC 7966 / DSM 30187 / BCRC 13018 / CCUG 14551 / JCM 1027 / KCTC 2358 / NCIMB 9240 / NCTC 8049)</name>
    <dbReference type="NCBI Taxonomy" id="380703"/>
    <lineage>
        <taxon>Bacteria</taxon>
        <taxon>Pseudomonadati</taxon>
        <taxon>Pseudomonadota</taxon>
        <taxon>Gammaproteobacteria</taxon>
        <taxon>Aeromonadales</taxon>
        <taxon>Aeromonadaceae</taxon>
        <taxon>Aeromonas</taxon>
    </lineage>
</organism>
<protein>
    <recommendedName>
        <fullName evidence="1">ATP synthase subunit a</fullName>
    </recommendedName>
    <alternativeName>
        <fullName evidence="1">ATP synthase F0 sector subunit a</fullName>
    </alternativeName>
    <alternativeName>
        <fullName evidence="1">F-ATPase subunit 6</fullName>
    </alternativeName>
</protein>
<comment type="function">
    <text evidence="1">Key component of the proton channel; it plays a direct role in the translocation of protons across the membrane.</text>
</comment>
<comment type="subunit">
    <text evidence="1">F-type ATPases have 2 components, CF(1) - the catalytic core - and CF(0) - the membrane proton channel. CF(1) has five subunits: alpha(3), beta(3), gamma(1), delta(1), epsilon(1). CF(0) has three main subunits: a(1), b(2) and c(9-12). The alpha and beta chains form an alternating ring which encloses part of the gamma chain. CF(1) is attached to CF(0) by a central stalk formed by the gamma and epsilon chains, while a peripheral stalk is formed by the delta and b chains.</text>
</comment>
<comment type="subcellular location">
    <subcellularLocation>
        <location evidence="1">Cell inner membrane</location>
        <topology evidence="1">Multi-pass membrane protein</topology>
    </subcellularLocation>
</comment>
<comment type="similarity">
    <text evidence="1">Belongs to the ATPase A chain family.</text>
</comment>
<gene>
    <name evidence="1" type="primary">atpB</name>
    <name type="ordered locus">AHA_4268</name>
</gene>
<keyword id="KW-0066">ATP synthesis</keyword>
<keyword id="KW-0997">Cell inner membrane</keyword>
<keyword id="KW-1003">Cell membrane</keyword>
<keyword id="KW-0138">CF(0)</keyword>
<keyword id="KW-0375">Hydrogen ion transport</keyword>
<keyword id="KW-0406">Ion transport</keyword>
<keyword id="KW-0472">Membrane</keyword>
<keyword id="KW-1185">Reference proteome</keyword>
<keyword id="KW-0812">Transmembrane</keyword>
<keyword id="KW-1133">Transmembrane helix</keyword>
<keyword id="KW-0813">Transport</keyword>
<accession>A0KQY4</accession>
<reference key="1">
    <citation type="journal article" date="2006" name="J. Bacteriol.">
        <title>Genome sequence of Aeromonas hydrophila ATCC 7966T: jack of all trades.</title>
        <authorList>
            <person name="Seshadri R."/>
            <person name="Joseph S.W."/>
            <person name="Chopra A.K."/>
            <person name="Sha J."/>
            <person name="Shaw J."/>
            <person name="Graf J."/>
            <person name="Haft D.H."/>
            <person name="Wu M."/>
            <person name="Ren Q."/>
            <person name="Rosovitz M.J."/>
            <person name="Madupu R."/>
            <person name="Tallon L."/>
            <person name="Kim M."/>
            <person name="Jin S."/>
            <person name="Vuong H."/>
            <person name="Stine O.C."/>
            <person name="Ali A."/>
            <person name="Horneman A.J."/>
            <person name="Heidelberg J.F."/>
        </authorList>
    </citation>
    <scope>NUCLEOTIDE SEQUENCE [LARGE SCALE GENOMIC DNA]</scope>
    <source>
        <strain>ATCC 7966 / DSM 30187 / BCRC 13018 / CCUG 14551 / JCM 1027 / KCTC 2358 / NCIMB 9240 / NCTC 8049</strain>
    </source>
</reference>
<sequence length="260" mass="28905">MSATGEVLTPQGYISHHLTHLQVGSGFWTVNIDSMIFSVLLGALFIWSFRRVAVKATSGVPGKLQCFVEMLVEFVSGNVKDIFHGRNKVIAPLGLTVFVWIFLMNLMDLIPVDFIPHAAQLMGVPYLRVVPSADVNITMSMALGVFFLILYYSIKVKGIGGFVKELTLQPFNHPAAIPVNLILETVTLISKPVSLGLRLFGNMYAGELIFILIAGLLPWWSQWILSVPWAIFHILIITLQAFIFMVLTIVYLSMAQEDHG</sequence>
<evidence type="ECO:0000255" key="1">
    <source>
        <dbReference type="HAMAP-Rule" id="MF_01393"/>
    </source>
</evidence>